<organism>
    <name type="scientific">Cereibacter sphaeroides (strain ATCC 17029 / ATH 2.4.9)</name>
    <name type="common">Rhodobacter sphaeroides</name>
    <dbReference type="NCBI Taxonomy" id="349101"/>
    <lineage>
        <taxon>Bacteria</taxon>
        <taxon>Pseudomonadati</taxon>
        <taxon>Pseudomonadota</taxon>
        <taxon>Alphaproteobacteria</taxon>
        <taxon>Rhodobacterales</taxon>
        <taxon>Paracoccaceae</taxon>
        <taxon>Cereibacter</taxon>
    </lineage>
</organism>
<name>RL28_CERS1</name>
<keyword id="KW-0687">Ribonucleoprotein</keyword>
<keyword id="KW-0689">Ribosomal protein</keyword>
<reference key="1">
    <citation type="submission" date="2007-02" db="EMBL/GenBank/DDBJ databases">
        <title>Complete sequence of chromosome 1 of Rhodobacter sphaeroides ATCC 17029.</title>
        <authorList>
            <person name="Copeland A."/>
            <person name="Lucas S."/>
            <person name="Lapidus A."/>
            <person name="Barry K."/>
            <person name="Detter J.C."/>
            <person name="Glavina del Rio T."/>
            <person name="Hammon N."/>
            <person name="Israni S."/>
            <person name="Dalin E."/>
            <person name="Tice H."/>
            <person name="Pitluck S."/>
            <person name="Kiss H."/>
            <person name="Brettin T."/>
            <person name="Bruce D."/>
            <person name="Han C."/>
            <person name="Tapia R."/>
            <person name="Gilna P."/>
            <person name="Schmutz J."/>
            <person name="Larimer F."/>
            <person name="Land M."/>
            <person name="Hauser L."/>
            <person name="Kyrpides N."/>
            <person name="Mikhailova N."/>
            <person name="Richardson P."/>
            <person name="Mackenzie C."/>
            <person name="Choudhary M."/>
            <person name="Donohue T.J."/>
            <person name="Kaplan S."/>
        </authorList>
    </citation>
    <scope>NUCLEOTIDE SEQUENCE [LARGE SCALE GENOMIC DNA]</scope>
    <source>
        <strain>ATCC 17029 / ATH 2.4.9</strain>
    </source>
</reference>
<comment type="similarity">
    <text evidence="1">Belongs to the bacterial ribosomal protein bL28 family.</text>
</comment>
<protein>
    <recommendedName>
        <fullName evidence="1">Large ribosomal subunit protein bL28</fullName>
    </recommendedName>
    <alternativeName>
        <fullName evidence="3">50S ribosomal protein L28</fullName>
    </alternativeName>
</protein>
<evidence type="ECO:0000255" key="1">
    <source>
        <dbReference type="HAMAP-Rule" id="MF_00373"/>
    </source>
</evidence>
<evidence type="ECO:0000256" key="2">
    <source>
        <dbReference type="SAM" id="MobiDB-lite"/>
    </source>
</evidence>
<evidence type="ECO:0000305" key="3"/>
<feature type="chain" id="PRO_1000007333" description="Large ribosomal subunit protein bL28">
    <location>
        <begin position="1"/>
        <end position="96"/>
    </location>
</feature>
<feature type="region of interest" description="Disordered" evidence="2">
    <location>
        <begin position="1"/>
        <end position="23"/>
    </location>
</feature>
<accession>A3PHM3</accession>
<proteinExistence type="inferred from homology"/>
<sequence length="96" mass="10392">MSRVCELSGKAPMTGNTVSHANNKSRRRFLPNLNDVTLISDVLGQSFKLRISAAALRTVDHRGGLDAFLAKAKDDELSVKARAIKKEIEKAQATAA</sequence>
<dbReference type="EMBL" id="CP000577">
    <property type="protein sequence ID" value="ABN75839.1"/>
    <property type="molecule type" value="Genomic_DNA"/>
</dbReference>
<dbReference type="RefSeq" id="WP_011337158.1">
    <property type="nucleotide sequence ID" value="NC_009049.1"/>
</dbReference>
<dbReference type="SMR" id="A3PHM3"/>
<dbReference type="GeneID" id="67445797"/>
<dbReference type="KEGG" id="rsh:Rsph17029_0726"/>
<dbReference type="HOGENOM" id="CLU_064548_4_2_5"/>
<dbReference type="GO" id="GO:0022625">
    <property type="term" value="C:cytosolic large ribosomal subunit"/>
    <property type="evidence" value="ECO:0007669"/>
    <property type="project" value="TreeGrafter"/>
</dbReference>
<dbReference type="GO" id="GO:0003735">
    <property type="term" value="F:structural constituent of ribosome"/>
    <property type="evidence" value="ECO:0007669"/>
    <property type="project" value="InterPro"/>
</dbReference>
<dbReference type="GO" id="GO:0006412">
    <property type="term" value="P:translation"/>
    <property type="evidence" value="ECO:0007669"/>
    <property type="project" value="UniProtKB-UniRule"/>
</dbReference>
<dbReference type="Gene3D" id="2.30.170.40">
    <property type="entry name" value="Ribosomal protein L28/L24"/>
    <property type="match status" value="1"/>
</dbReference>
<dbReference type="HAMAP" id="MF_00373">
    <property type="entry name" value="Ribosomal_bL28"/>
    <property type="match status" value="1"/>
</dbReference>
<dbReference type="InterPro" id="IPR026569">
    <property type="entry name" value="Ribosomal_bL28"/>
</dbReference>
<dbReference type="InterPro" id="IPR034704">
    <property type="entry name" value="Ribosomal_bL28/bL31-like_sf"/>
</dbReference>
<dbReference type="InterPro" id="IPR001383">
    <property type="entry name" value="Ribosomal_bL28_bact-type"/>
</dbReference>
<dbReference type="InterPro" id="IPR037147">
    <property type="entry name" value="Ribosomal_bL28_sf"/>
</dbReference>
<dbReference type="NCBIfam" id="TIGR00009">
    <property type="entry name" value="L28"/>
    <property type="match status" value="1"/>
</dbReference>
<dbReference type="PANTHER" id="PTHR13528">
    <property type="entry name" value="39S RIBOSOMAL PROTEIN L28, MITOCHONDRIAL"/>
    <property type="match status" value="1"/>
</dbReference>
<dbReference type="PANTHER" id="PTHR13528:SF2">
    <property type="entry name" value="LARGE RIBOSOMAL SUBUNIT PROTEIN BL28M"/>
    <property type="match status" value="1"/>
</dbReference>
<dbReference type="Pfam" id="PF00830">
    <property type="entry name" value="Ribosomal_L28"/>
    <property type="match status" value="1"/>
</dbReference>
<dbReference type="SUPFAM" id="SSF143800">
    <property type="entry name" value="L28p-like"/>
    <property type="match status" value="1"/>
</dbReference>
<gene>
    <name evidence="1" type="primary">rpmB</name>
    <name type="ordered locus">Rsph17029_0726</name>
</gene>